<feature type="chain" id="PRO_1000195312" description="UPF0758 protein SUB0843">
    <location>
        <begin position="1"/>
        <end position="226"/>
    </location>
</feature>
<feature type="domain" description="MPN" evidence="1">
    <location>
        <begin position="103"/>
        <end position="225"/>
    </location>
</feature>
<feature type="short sequence motif" description="JAMM motif" evidence="1">
    <location>
        <begin position="174"/>
        <end position="187"/>
    </location>
</feature>
<feature type="binding site" evidence="1">
    <location>
        <position position="174"/>
    </location>
    <ligand>
        <name>Zn(2+)</name>
        <dbReference type="ChEBI" id="CHEBI:29105"/>
        <note>catalytic</note>
    </ligand>
</feature>
<feature type="binding site" evidence="1">
    <location>
        <position position="176"/>
    </location>
    <ligand>
        <name>Zn(2+)</name>
        <dbReference type="ChEBI" id="CHEBI:29105"/>
        <note>catalytic</note>
    </ligand>
</feature>
<feature type="binding site" evidence="1">
    <location>
        <position position="187"/>
    </location>
    <ligand>
        <name>Zn(2+)</name>
        <dbReference type="ChEBI" id="CHEBI:29105"/>
        <note>catalytic</note>
    </ligand>
</feature>
<name>Y843_STRU0</name>
<proteinExistence type="inferred from homology"/>
<sequence>MYAVKLNKDTLLPREKLVQYGVEQLSHQELLAILLRTGNKEKHVMELASHILHCLESLADFDKLSLQELQQLPGIGKVKAIELKAMVELCHRIQKAKSSHSIQILSSYQVAKRMMHELGDKKQEHLIAIYLDTQNRIIEEKTIFIGSVRRSIAEPREILHFACRNMATSLIVVHNHPSGLTNPSENDVAFTKKIKRSCDHLGINCLDHIIVGKKQYYSFREKSDIF</sequence>
<gene>
    <name type="ordered locus">SUB0843</name>
</gene>
<protein>
    <recommendedName>
        <fullName>UPF0758 protein SUB0843</fullName>
    </recommendedName>
</protein>
<organism>
    <name type="scientific">Streptococcus uberis (strain ATCC BAA-854 / 0140J)</name>
    <dbReference type="NCBI Taxonomy" id="218495"/>
    <lineage>
        <taxon>Bacteria</taxon>
        <taxon>Bacillati</taxon>
        <taxon>Bacillota</taxon>
        <taxon>Bacilli</taxon>
        <taxon>Lactobacillales</taxon>
        <taxon>Streptococcaceae</taxon>
        <taxon>Streptococcus</taxon>
    </lineage>
</organism>
<comment type="similarity">
    <text evidence="2">Belongs to the UPF0758 family.</text>
</comment>
<keyword id="KW-0378">Hydrolase</keyword>
<keyword id="KW-0479">Metal-binding</keyword>
<keyword id="KW-0482">Metalloprotease</keyword>
<keyword id="KW-0645">Protease</keyword>
<keyword id="KW-1185">Reference proteome</keyword>
<keyword id="KW-0862">Zinc</keyword>
<accession>B9DS19</accession>
<dbReference type="EMBL" id="AM946015">
    <property type="protein sequence ID" value="CAR41883.1"/>
    <property type="molecule type" value="Genomic_DNA"/>
</dbReference>
<dbReference type="SMR" id="B9DS19"/>
<dbReference type="STRING" id="218495.SUB0843"/>
<dbReference type="KEGG" id="sub:SUB0843"/>
<dbReference type="eggNOG" id="COG2003">
    <property type="taxonomic scope" value="Bacteria"/>
</dbReference>
<dbReference type="HOGENOM" id="CLU_073529_0_2_9"/>
<dbReference type="OrthoDB" id="9804482at2"/>
<dbReference type="Proteomes" id="UP000000449">
    <property type="component" value="Chromosome"/>
</dbReference>
<dbReference type="GO" id="GO:0046872">
    <property type="term" value="F:metal ion binding"/>
    <property type="evidence" value="ECO:0007669"/>
    <property type="project" value="UniProtKB-KW"/>
</dbReference>
<dbReference type="GO" id="GO:0008237">
    <property type="term" value="F:metallopeptidase activity"/>
    <property type="evidence" value="ECO:0007669"/>
    <property type="project" value="UniProtKB-KW"/>
</dbReference>
<dbReference type="GO" id="GO:0006508">
    <property type="term" value="P:proteolysis"/>
    <property type="evidence" value="ECO:0007669"/>
    <property type="project" value="UniProtKB-KW"/>
</dbReference>
<dbReference type="CDD" id="cd08071">
    <property type="entry name" value="MPN_DUF2466"/>
    <property type="match status" value="1"/>
</dbReference>
<dbReference type="Gene3D" id="3.40.140.10">
    <property type="entry name" value="Cytidine Deaminase, domain 2"/>
    <property type="match status" value="1"/>
</dbReference>
<dbReference type="InterPro" id="IPR037518">
    <property type="entry name" value="MPN"/>
</dbReference>
<dbReference type="InterPro" id="IPR025657">
    <property type="entry name" value="RadC_JAB"/>
</dbReference>
<dbReference type="InterPro" id="IPR010994">
    <property type="entry name" value="RuvA_2-like"/>
</dbReference>
<dbReference type="InterPro" id="IPR001405">
    <property type="entry name" value="UPF0758"/>
</dbReference>
<dbReference type="InterPro" id="IPR020891">
    <property type="entry name" value="UPF0758_CS"/>
</dbReference>
<dbReference type="InterPro" id="IPR046778">
    <property type="entry name" value="UPF0758_N"/>
</dbReference>
<dbReference type="NCBIfam" id="NF000642">
    <property type="entry name" value="PRK00024.1"/>
    <property type="match status" value="1"/>
</dbReference>
<dbReference type="NCBIfam" id="TIGR00608">
    <property type="entry name" value="radc"/>
    <property type="match status" value="1"/>
</dbReference>
<dbReference type="PANTHER" id="PTHR30471">
    <property type="entry name" value="DNA REPAIR PROTEIN RADC"/>
    <property type="match status" value="1"/>
</dbReference>
<dbReference type="PANTHER" id="PTHR30471:SF3">
    <property type="entry name" value="UPF0758 PROTEIN YEES-RELATED"/>
    <property type="match status" value="1"/>
</dbReference>
<dbReference type="Pfam" id="PF04002">
    <property type="entry name" value="RadC"/>
    <property type="match status" value="1"/>
</dbReference>
<dbReference type="Pfam" id="PF20582">
    <property type="entry name" value="UPF0758_N"/>
    <property type="match status" value="1"/>
</dbReference>
<dbReference type="SUPFAM" id="SSF47781">
    <property type="entry name" value="RuvA domain 2-like"/>
    <property type="match status" value="1"/>
</dbReference>
<dbReference type="PROSITE" id="PS50249">
    <property type="entry name" value="MPN"/>
    <property type="match status" value="1"/>
</dbReference>
<dbReference type="PROSITE" id="PS01302">
    <property type="entry name" value="UPF0758"/>
    <property type="match status" value="1"/>
</dbReference>
<evidence type="ECO:0000255" key="1">
    <source>
        <dbReference type="PROSITE-ProRule" id="PRU01182"/>
    </source>
</evidence>
<evidence type="ECO:0000305" key="2"/>
<reference key="1">
    <citation type="journal article" date="2009" name="BMC Genomics">
        <title>Evidence for niche adaptation in the genome of the bovine pathogen Streptococcus uberis.</title>
        <authorList>
            <person name="Ward P.N."/>
            <person name="Holden M.T.G."/>
            <person name="Leigh J.A."/>
            <person name="Lennard N."/>
            <person name="Bignell A."/>
            <person name="Barron A."/>
            <person name="Clark L."/>
            <person name="Quail M.A."/>
            <person name="Woodward J."/>
            <person name="Barrell B.G."/>
            <person name="Egan S.A."/>
            <person name="Field T.R."/>
            <person name="Maskell D."/>
            <person name="Kehoe M."/>
            <person name="Dowson C.G."/>
            <person name="Chanter N."/>
            <person name="Whatmore A.M."/>
            <person name="Bentley S.D."/>
            <person name="Parkhill J."/>
        </authorList>
    </citation>
    <scope>NUCLEOTIDE SEQUENCE [LARGE SCALE GENOMIC DNA]</scope>
    <source>
        <strain>ATCC BAA-854 / 0140J</strain>
    </source>
</reference>